<organism>
    <name type="scientific">Paramurexia rothschildi</name>
    <name type="common">Broad-striped dasyure</name>
    <name type="synonym">Murexia rothschildi</name>
    <dbReference type="NCBI Taxonomy" id="418657"/>
    <lineage>
        <taxon>Eukaryota</taxon>
        <taxon>Metazoa</taxon>
        <taxon>Chordata</taxon>
        <taxon>Craniata</taxon>
        <taxon>Vertebrata</taxon>
        <taxon>Euteleostomi</taxon>
        <taxon>Mammalia</taxon>
        <taxon>Metatheria</taxon>
        <taxon>Dasyuromorphia</taxon>
        <taxon>Dasyuridae</taxon>
        <taxon>Murexia</taxon>
    </lineage>
</organism>
<keyword id="KW-0249">Electron transport</keyword>
<keyword id="KW-0349">Heme</keyword>
<keyword id="KW-0408">Iron</keyword>
<keyword id="KW-0472">Membrane</keyword>
<keyword id="KW-0479">Metal-binding</keyword>
<keyword id="KW-0496">Mitochondrion</keyword>
<keyword id="KW-0999">Mitochondrion inner membrane</keyword>
<keyword id="KW-0679">Respiratory chain</keyword>
<keyword id="KW-0812">Transmembrane</keyword>
<keyword id="KW-1133">Transmembrane helix</keyword>
<keyword id="KW-0813">Transport</keyword>
<keyword id="KW-0830">Ubiquinone</keyword>
<geneLocation type="mitochondrion"/>
<name>CYB_PARRT</name>
<proteinExistence type="inferred from homology"/>
<reference key="1">
    <citation type="journal article" date="1994" name="J. Mammal. Evol.">
        <title>Phylogenetic structure of the marsupial family Dasyuridae based on cytochrome-b DNA sequences.</title>
        <authorList>
            <person name="Krajewski C."/>
            <person name="Painter J."/>
            <person name="Buckley L."/>
            <person name="Westerman M."/>
        </authorList>
    </citation>
    <scope>NUCLEOTIDE SEQUENCE [GENOMIC DNA]</scope>
</reference>
<feature type="chain" id="PRO_0000061218" description="Cytochrome b">
    <location>
        <begin position="1"/>
        <end position="381"/>
    </location>
</feature>
<feature type="transmembrane region" description="Helical" evidence="2">
    <location>
        <begin position="33"/>
        <end position="53"/>
    </location>
</feature>
<feature type="transmembrane region" description="Helical" evidence="2">
    <location>
        <begin position="77"/>
        <end position="98"/>
    </location>
</feature>
<feature type="transmembrane region" description="Helical" evidence="2">
    <location>
        <begin position="113"/>
        <end position="133"/>
    </location>
</feature>
<feature type="transmembrane region" description="Helical" evidence="2">
    <location>
        <begin position="178"/>
        <end position="198"/>
    </location>
</feature>
<feature type="transmembrane region" description="Helical" evidence="2">
    <location>
        <begin position="226"/>
        <end position="246"/>
    </location>
</feature>
<feature type="transmembrane region" description="Helical" evidence="2">
    <location>
        <begin position="288"/>
        <end position="308"/>
    </location>
</feature>
<feature type="transmembrane region" description="Helical" evidence="2">
    <location>
        <begin position="320"/>
        <end position="340"/>
    </location>
</feature>
<feature type="transmembrane region" description="Helical" evidence="2">
    <location>
        <begin position="347"/>
        <end position="367"/>
    </location>
</feature>
<feature type="binding site" description="axial binding residue" evidence="2">
    <location>
        <position position="83"/>
    </location>
    <ligand>
        <name>heme b</name>
        <dbReference type="ChEBI" id="CHEBI:60344"/>
        <label>b562</label>
    </ligand>
    <ligandPart>
        <name>Fe</name>
        <dbReference type="ChEBI" id="CHEBI:18248"/>
    </ligandPart>
</feature>
<feature type="binding site" description="axial binding residue" evidence="2">
    <location>
        <position position="97"/>
    </location>
    <ligand>
        <name>heme b</name>
        <dbReference type="ChEBI" id="CHEBI:60344"/>
        <label>b566</label>
    </ligand>
    <ligandPart>
        <name>Fe</name>
        <dbReference type="ChEBI" id="CHEBI:18248"/>
    </ligandPart>
</feature>
<feature type="binding site" description="axial binding residue" evidence="2">
    <location>
        <position position="182"/>
    </location>
    <ligand>
        <name>heme b</name>
        <dbReference type="ChEBI" id="CHEBI:60344"/>
        <label>b562</label>
    </ligand>
    <ligandPart>
        <name>Fe</name>
        <dbReference type="ChEBI" id="CHEBI:18248"/>
    </ligandPart>
</feature>
<feature type="binding site" description="axial binding residue" evidence="2">
    <location>
        <position position="196"/>
    </location>
    <ligand>
        <name>heme b</name>
        <dbReference type="ChEBI" id="CHEBI:60344"/>
        <label>b566</label>
    </ligand>
    <ligandPart>
        <name>Fe</name>
        <dbReference type="ChEBI" id="CHEBI:18248"/>
    </ligandPart>
</feature>
<feature type="binding site" evidence="2">
    <location>
        <position position="201"/>
    </location>
    <ligand>
        <name>a ubiquinone</name>
        <dbReference type="ChEBI" id="CHEBI:16389"/>
    </ligand>
</feature>
<sequence>MINLRKTHPLMKIINQSFIDLPAPSNISAWWNFGSLLGACLIIQILTGFFLAMHYTSDTLTAFSSVAHICRDVNYGWLIRNLHANGASMFFMCLFLHVGRGIYYGSYLYKETWNIGVILLLTVMGTAFVGYVLPWGQMSFWGATVITNLLSAIPYIGTTLAEWIWGGFAVDKATLTRFFAFHFILPFIITALAIVHLLFLHETGSNNPSGINPDSDKIPFHPYYTIKDALGLILMFMVLLLLALFSPDLLGDPDNFSPANPLNTPPHIKPEWYFLFAYAILRSIPNKLGGVLALLASILILLIIPLLHTANQRSMMFRPVSQTLFWILAANLVTLTWIGGQPVEQPFIIIGQLASMLYFLLILVLMPLAGMFENYMLKPKW</sequence>
<comment type="function">
    <text evidence="2">Component of the ubiquinol-cytochrome c reductase complex (complex III or cytochrome b-c1 complex) that is part of the mitochondrial respiratory chain. The b-c1 complex mediates electron transfer from ubiquinol to cytochrome c. Contributes to the generation of a proton gradient across the mitochondrial membrane that is then used for ATP synthesis.</text>
</comment>
<comment type="cofactor">
    <cofactor evidence="2">
        <name>heme b</name>
        <dbReference type="ChEBI" id="CHEBI:60344"/>
    </cofactor>
    <text evidence="2">Binds 2 heme b groups non-covalently.</text>
</comment>
<comment type="subunit">
    <text evidence="2">The cytochrome bc1 complex contains 11 subunits: 3 respiratory subunits (MT-CYB, CYC1 and UQCRFS1), 2 core proteins (UQCRC1 and UQCRC2) and 6 low-molecular weight proteins (UQCRH/QCR6, UQCRB/QCR7, UQCRQ/QCR8, UQCR10/QCR9, UQCR11/QCR10 and a cleavage product of UQCRFS1). This cytochrome bc1 complex then forms a dimer.</text>
</comment>
<comment type="subcellular location">
    <subcellularLocation>
        <location evidence="2">Mitochondrion inner membrane</location>
        <topology evidence="2">Multi-pass membrane protein</topology>
    </subcellularLocation>
</comment>
<comment type="miscellaneous">
    <text evidence="1">Heme 1 (or BL or b562) is low-potential and absorbs at about 562 nm, and heme 2 (or BH or b566) is high-potential and absorbs at about 566 nm.</text>
</comment>
<comment type="similarity">
    <text evidence="3 4">Belongs to the cytochrome b family.</text>
</comment>
<comment type="caution">
    <text evidence="2">The full-length protein contains only eight transmembrane helices, not nine as predicted by bioinformatics tools.</text>
</comment>
<protein>
    <recommendedName>
        <fullName>Cytochrome b</fullName>
    </recommendedName>
    <alternativeName>
        <fullName>Complex III subunit 3</fullName>
    </alternativeName>
    <alternativeName>
        <fullName>Complex III subunit III</fullName>
    </alternativeName>
    <alternativeName>
        <fullName>Cytochrome b-c1 complex subunit 3</fullName>
    </alternativeName>
    <alternativeName>
        <fullName>Ubiquinol-cytochrome-c reductase complex cytochrome b subunit</fullName>
    </alternativeName>
</protein>
<dbReference type="EMBL" id="U07583">
    <property type="protein sequence ID" value="AAC04121.1"/>
    <property type="molecule type" value="Genomic_DNA"/>
</dbReference>
<dbReference type="SMR" id="Q35078"/>
<dbReference type="GO" id="GO:0005743">
    <property type="term" value="C:mitochondrial inner membrane"/>
    <property type="evidence" value="ECO:0007669"/>
    <property type="project" value="UniProtKB-SubCell"/>
</dbReference>
<dbReference type="GO" id="GO:0045275">
    <property type="term" value="C:respiratory chain complex III"/>
    <property type="evidence" value="ECO:0007669"/>
    <property type="project" value="InterPro"/>
</dbReference>
<dbReference type="GO" id="GO:0046872">
    <property type="term" value="F:metal ion binding"/>
    <property type="evidence" value="ECO:0007669"/>
    <property type="project" value="UniProtKB-KW"/>
</dbReference>
<dbReference type="GO" id="GO:0008121">
    <property type="term" value="F:ubiquinol-cytochrome-c reductase activity"/>
    <property type="evidence" value="ECO:0007669"/>
    <property type="project" value="InterPro"/>
</dbReference>
<dbReference type="GO" id="GO:0006122">
    <property type="term" value="P:mitochondrial electron transport, ubiquinol to cytochrome c"/>
    <property type="evidence" value="ECO:0007669"/>
    <property type="project" value="TreeGrafter"/>
</dbReference>
<dbReference type="CDD" id="cd00290">
    <property type="entry name" value="cytochrome_b_C"/>
    <property type="match status" value="1"/>
</dbReference>
<dbReference type="CDD" id="cd00284">
    <property type="entry name" value="Cytochrome_b_N"/>
    <property type="match status" value="1"/>
</dbReference>
<dbReference type="FunFam" id="1.20.810.10:FF:000002">
    <property type="entry name" value="Cytochrome b"/>
    <property type="match status" value="1"/>
</dbReference>
<dbReference type="Gene3D" id="1.20.810.10">
    <property type="entry name" value="Cytochrome Bc1 Complex, Chain C"/>
    <property type="match status" value="1"/>
</dbReference>
<dbReference type="InterPro" id="IPR005798">
    <property type="entry name" value="Cyt_b/b6_C"/>
</dbReference>
<dbReference type="InterPro" id="IPR036150">
    <property type="entry name" value="Cyt_b/b6_C_sf"/>
</dbReference>
<dbReference type="InterPro" id="IPR005797">
    <property type="entry name" value="Cyt_b/b6_N"/>
</dbReference>
<dbReference type="InterPro" id="IPR027387">
    <property type="entry name" value="Cytb/b6-like_sf"/>
</dbReference>
<dbReference type="InterPro" id="IPR030689">
    <property type="entry name" value="Cytochrome_b"/>
</dbReference>
<dbReference type="InterPro" id="IPR048260">
    <property type="entry name" value="Cytochrome_b_C_euk/bac"/>
</dbReference>
<dbReference type="InterPro" id="IPR048259">
    <property type="entry name" value="Cytochrome_b_N_euk/bac"/>
</dbReference>
<dbReference type="InterPro" id="IPR016174">
    <property type="entry name" value="Di-haem_cyt_TM"/>
</dbReference>
<dbReference type="PANTHER" id="PTHR19271">
    <property type="entry name" value="CYTOCHROME B"/>
    <property type="match status" value="1"/>
</dbReference>
<dbReference type="PANTHER" id="PTHR19271:SF16">
    <property type="entry name" value="CYTOCHROME B"/>
    <property type="match status" value="1"/>
</dbReference>
<dbReference type="Pfam" id="PF00032">
    <property type="entry name" value="Cytochrom_B_C"/>
    <property type="match status" value="1"/>
</dbReference>
<dbReference type="Pfam" id="PF00033">
    <property type="entry name" value="Cytochrome_B"/>
    <property type="match status" value="1"/>
</dbReference>
<dbReference type="PIRSF" id="PIRSF038885">
    <property type="entry name" value="COB"/>
    <property type="match status" value="1"/>
</dbReference>
<dbReference type="SUPFAM" id="SSF81648">
    <property type="entry name" value="a domain/subunit of cytochrome bc1 complex (Ubiquinol-cytochrome c reductase)"/>
    <property type="match status" value="1"/>
</dbReference>
<dbReference type="SUPFAM" id="SSF81342">
    <property type="entry name" value="Transmembrane di-heme cytochromes"/>
    <property type="match status" value="1"/>
</dbReference>
<dbReference type="PROSITE" id="PS51003">
    <property type="entry name" value="CYTB_CTER"/>
    <property type="match status" value="1"/>
</dbReference>
<dbReference type="PROSITE" id="PS51002">
    <property type="entry name" value="CYTB_NTER"/>
    <property type="match status" value="1"/>
</dbReference>
<evidence type="ECO:0000250" key="1"/>
<evidence type="ECO:0000250" key="2">
    <source>
        <dbReference type="UniProtKB" id="P00157"/>
    </source>
</evidence>
<evidence type="ECO:0000255" key="3">
    <source>
        <dbReference type="PROSITE-ProRule" id="PRU00967"/>
    </source>
</evidence>
<evidence type="ECO:0000255" key="4">
    <source>
        <dbReference type="PROSITE-ProRule" id="PRU00968"/>
    </source>
</evidence>
<accession>Q35078</accession>
<gene>
    <name type="primary">MT-CYB</name>
    <name type="synonym">COB</name>
    <name type="synonym">CYTB</name>
    <name type="synonym">MTCYB</name>
</gene>